<proteinExistence type="predicted"/>
<protein>
    <recommendedName>
        <fullName>Uncharacterized protein U95</fullName>
    </recommendedName>
</protein>
<dbReference type="EMBL" id="AF157706">
    <property type="protein sequence ID" value="AAD49679.1"/>
    <property type="molecule type" value="Genomic_DNA"/>
</dbReference>
<dbReference type="RefSeq" id="NP_050270.1">
    <property type="nucleotide sequence ID" value="NC_000898.1"/>
</dbReference>
<dbReference type="BioGRID" id="1678317">
    <property type="interactions" value="1"/>
</dbReference>
<dbReference type="GeneID" id="1497091"/>
<dbReference type="KEGG" id="vg:1497091"/>
<dbReference type="Proteomes" id="UP000006930">
    <property type="component" value="Segment"/>
</dbReference>
<dbReference type="InterPro" id="IPR003360">
    <property type="entry name" value="US22-like"/>
</dbReference>
<dbReference type="Pfam" id="PF02393">
    <property type="entry name" value="US22"/>
    <property type="match status" value="1"/>
</dbReference>
<keyword id="KW-1185">Reference proteome</keyword>
<feature type="chain" id="PRO_0000408432" description="Uncharacterized protein U95">
    <location>
        <begin position="1"/>
        <end position="1212"/>
    </location>
</feature>
<feature type="region of interest" description="Disordered" evidence="1">
    <location>
        <begin position="783"/>
        <end position="802"/>
    </location>
</feature>
<evidence type="ECO:0000256" key="1">
    <source>
        <dbReference type="SAM" id="MobiDB-lite"/>
    </source>
</evidence>
<organism>
    <name type="scientific">Human herpesvirus 6B (strain Z29)</name>
    <name type="common">HHV-6 variant B</name>
    <name type="synonym">Human B lymphotropic virus</name>
    <dbReference type="NCBI Taxonomy" id="36351"/>
    <lineage>
        <taxon>Viruses</taxon>
        <taxon>Duplodnaviria</taxon>
        <taxon>Heunggongvirae</taxon>
        <taxon>Peploviricota</taxon>
        <taxon>Herviviricetes</taxon>
        <taxon>Herpesvirales</taxon>
        <taxon>Orthoherpesviridae</taxon>
        <taxon>Betaherpesvirinae</taxon>
        <taxon>Roseolovirus</taxon>
        <taxon>Roseolovirus humanbeta6b</taxon>
        <taxon>Human herpesvirus 6B</taxon>
    </lineage>
</organism>
<reference key="1">
    <citation type="journal article" date="1999" name="J. Virol.">
        <title>Human herpesvirus 6B genome sequence: coding content and comparison with human herpesvirus 6A.</title>
        <authorList>
            <person name="Dominguez G."/>
            <person name="Dambaugh T.R."/>
            <person name="Stamey F.R."/>
            <person name="Dewhurst S."/>
            <person name="Inoue N."/>
            <person name="Pellett P.E."/>
        </authorList>
    </citation>
    <scope>NUCLEOTIDE SEQUENCE [LARGE SCALE GENOMIC DNA]</scope>
</reference>
<organismHost>
    <name type="scientific">Homo sapiens</name>
    <name type="common">Human</name>
    <dbReference type="NCBI Taxonomy" id="9606"/>
</organismHost>
<accession>Q9QJ12</accession>
<name>U95_HHV6Z</name>
<gene>
    <name type="primary">U95</name>
</gene>
<sequence length="1212" mass="133086">MSSNLEDLLWQQILSMDPAELLSDNAISSTCDENIAAGHHFTQSPHVEMSVQSTTSAGHTGVMTTQSQFSNGVRDQNRESLSTLTGLSLESINNQINVQPTQMTFQPISPPMQGQNYVYSNNMINPIKPRSIIKSHGHSMGEMSFADHSLYVNAQPPVQQPQLKSLVGMHPCMTATSQGKYQTNKTVGPPSISASQITTGNAGIRPGEYQSVHNQSSVNGSKSYEITTASGDEWILTTPGGQSWTLKRNPPNPPNNRTNSVVNKAQQVSHAQPYVSGSSDGFYQGAALQSCAYVNTPGFTPVCETQNMNNSQATQLSASMNCINALQTTMDAIVTSTSKPVGAVSNNRGANFGMGGMENYMDNNSPWNQYCKVQDIVSQNCSQGKVVSSTPGIAPNLMKGNGLNVYGHVGCVDAAISDKQGGTANVASSLLNPEHQDWMRVTGTSTNLLNNINAETKMENYGFPENGNVHGAVNTALPLTLSSGQPYTSVPQHGACEGNGTIPVVQICSPNTAFKAHYSLLGTVDENNPLSVRESIQDTSFSNGCAPQLSSPGGNPTIIAHSMIGNNGTPNKDVCKPTPSLRAIKKLNFDYDDRGENIGFPSKLAALLSMGENMSKMDNPCYGTSLAQFEESHQQNASEGKISIADLEFSEEDDVLSSAASVSCNDNCVMKIGASQQGTTVADLQQGFKQQMNGEFSMFAVDGNIKTQEMSNDCASNVTDNACAIRQNKRMHCEIGISEDGRVREEEKCSDVAIHVPRKSARIHNMKSEGVTCGMCVTAADSTRQDASGGSSSGTKKGEKLQGLWKGYQDDDDSELTELSDTDSDNDVQNCHGVRKTGSKTYSSVFFNPDYRQAKRLLADIPYRRWIPDTFNMEEHEGPFLPIVTRPPTVFMGGRRRRTYLRRSVTSIGPLSKLTYFKELLQSYVLRNSNCYLSIGWPAKHRVYIMSEEKLGYNHIPTLREMFPLPPGWMIVLGIVGSETPAALYKHMVVLLCENKWVLLHNYRDSKHELYFAASDLKQFMEEGLSRCDCIYYEKSVPYGVAMEDSVREFLRNSKTFQSLMEYRKNMHGSTWTFNGMPGRLGDRVIHICNPELVNSIPADEAIRYEGKPLYFFAFVTTFKSHPGSKANVLIAADKNLGIYGYHKGRPRIRYLCKNVQAFFRAGVRKMYLDYEIPSKTLLAVSEDDYLCILQKAPCLLLKPAVFRKTFSQEGK</sequence>